<dbReference type="EC" id="2.7.4.22" evidence="1"/>
<dbReference type="EMBL" id="CP000116">
    <property type="protein sequence ID" value="AAZ96740.1"/>
    <property type="molecule type" value="Genomic_DNA"/>
</dbReference>
<dbReference type="RefSeq" id="WP_011311299.1">
    <property type="nucleotide sequence ID" value="NC_007404.1"/>
</dbReference>
<dbReference type="SMR" id="Q3SKN7"/>
<dbReference type="STRING" id="292415.Tbd_0787"/>
<dbReference type="KEGG" id="tbd:Tbd_0787"/>
<dbReference type="eggNOG" id="COG0528">
    <property type="taxonomic scope" value="Bacteria"/>
</dbReference>
<dbReference type="HOGENOM" id="CLU_033861_0_0_4"/>
<dbReference type="OrthoDB" id="9807458at2"/>
<dbReference type="UniPathway" id="UPA00159">
    <property type="reaction ID" value="UER00275"/>
</dbReference>
<dbReference type="Proteomes" id="UP000008291">
    <property type="component" value="Chromosome"/>
</dbReference>
<dbReference type="GO" id="GO:0005829">
    <property type="term" value="C:cytosol"/>
    <property type="evidence" value="ECO:0007669"/>
    <property type="project" value="TreeGrafter"/>
</dbReference>
<dbReference type="GO" id="GO:0005524">
    <property type="term" value="F:ATP binding"/>
    <property type="evidence" value="ECO:0007669"/>
    <property type="project" value="UniProtKB-KW"/>
</dbReference>
<dbReference type="GO" id="GO:0033862">
    <property type="term" value="F:UMP kinase activity"/>
    <property type="evidence" value="ECO:0007669"/>
    <property type="project" value="UniProtKB-EC"/>
</dbReference>
<dbReference type="GO" id="GO:0044210">
    <property type="term" value="P:'de novo' CTP biosynthetic process"/>
    <property type="evidence" value="ECO:0007669"/>
    <property type="project" value="UniProtKB-UniRule"/>
</dbReference>
<dbReference type="GO" id="GO:0006225">
    <property type="term" value="P:UDP biosynthetic process"/>
    <property type="evidence" value="ECO:0007669"/>
    <property type="project" value="TreeGrafter"/>
</dbReference>
<dbReference type="CDD" id="cd04254">
    <property type="entry name" value="AAK_UMPK-PyrH-Ec"/>
    <property type="match status" value="1"/>
</dbReference>
<dbReference type="FunFam" id="3.40.1160.10:FF:000001">
    <property type="entry name" value="Uridylate kinase"/>
    <property type="match status" value="1"/>
</dbReference>
<dbReference type="Gene3D" id="3.40.1160.10">
    <property type="entry name" value="Acetylglutamate kinase-like"/>
    <property type="match status" value="1"/>
</dbReference>
<dbReference type="HAMAP" id="MF_01220_B">
    <property type="entry name" value="PyrH_B"/>
    <property type="match status" value="1"/>
</dbReference>
<dbReference type="InterPro" id="IPR036393">
    <property type="entry name" value="AceGlu_kinase-like_sf"/>
</dbReference>
<dbReference type="InterPro" id="IPR001048">
    <property type="entry name" value="Asp/Glu/Uridylate_kinase"/>
</dbReference>
<dbReference type="InterPro" id="IPR011817">
    <property type="entry name" value="Uridylate_kinase"/>
</dbReference>
<dbReference type="InterPro" id="IPR015963">
    <property type="entry name" value="Uridylate_kinase_bac"/>
</dbReference>
<dbReference type="NCBIfam" id="TIGR02075">
    <property type="entry name" value="pyrH_bact"/>
    <property type="match status" value="1"/>
</dbReference>
<dbReference type="PANTHER" id="PTHR42833">
    <property type="entry name" value="URIDYLATE KINASE"/>
    <property type="match status" value="1"/>
</dbReference>
<dbReference type="PANTHER" id="PTHR42833:SF4">
    <property type="entry name" value="URIDYLATE KINASE PUMPKIN, CHLOROPLASTIC"/>
    <property type="match status" value="1"/>
</dbReference>
<dbReference type="Pfam" id="PF00696">
    <property type="entry name" value="AA_kinase"/>
    <property type="match status" value="1"/>
</dbReference>
<dbReference type="PIRSF" id="PIRSF005650">
    <property type="entry name" value="Uridylate_kin"/>
    <property type="match status" value="1"/>
</dbReference>
<dbReference type="SUPFAM" id="SSF53633">
    <property type="entry name" value="Carbamate kinase-like"/>
    <property type="match status" value="1"/>
</dbReference>
<name>PYRH_THIDA</name>
<sequence length="237" mass="24773">MAPVRRILLKLSGEALMGPDSFGYHAGTMAGFVGQIRDVVALGVQVGIVVGGGNLFRGATGALAGMNRATADSMGMLATVMNALALKDALQQAGVAARVQTAVHIAHVGEGFERDAAVRELEAGRVVIFGGGTGNPFFTTDTAAALRAAEIDADLLLKATKVDGVYTADPNKDPDARRYDTLSFDEAIAKQLGVLDTAAFALCREQKLSLVVFNVFKPGALKRVVMGEDEGTRVSNH</sequence>
<feature type="chain" id="PRO_1000054047" description="Uridylate kinase">
    <location>
        <begin position="1"/>
        <end position="237"/>
    </location>
</feature>
<feature type="binding site" evidence="1">
    <location>
        <begin position="10"/>
        <end position="13"/>
    </location>
    <ligand>
        <name>ATP</name>
        <dbReference type="ChEBI" id="CHEBI:30616"/>
    </ligand>
</feature>
<feature type="binding site" evidence="1">
    <location>
        <position position="52"/>
    </location>
    <ligand>
        <name>UMP</name>
        <dbReference type="ChEBI" id="CHEBI:57865"/>
    </ligand>
</feature>
<feature type="binding site" evidence="1">
    <location>
        <position position="53"/>
    </location>
    <ligand>
        <name>ATP</name>
        <dbReference type="ChEBI" id="CHEBI:30616"/>
    </ligand>
</feature>
<feature type="binding site" evidence="1">
    <location>
        <position position="57"/>
    </location>
    <ligand>
        <name>ATP</name>
        <dbReference type="ChEBI" id="CHEBI:30616"/>
    </ligand>
</feature>
<feature type="binding site" evidence="1">
    <location>
        <position position="72"/>
    </location>
    <ligand>
        <name>UMP</name>
        <dbReference type="ChEBI" id="CHEBI:57865"/>
    </ligand>
</feature>
<feature type="binding site" evidence="1">
    <location>
        <begin position="133"/>
        <end position="140"/>
    </location>
    <ligand>
        <name>UMP</name>
        <dbReference type="ChEBI" id="CHEBI:57865"/>
    </ligand>
</feature>
<feature type="binding site" evidence="1">
    <location>
        <position position="160"/>
    </location>
    <ligand>
        <name>ATP</name>
        <dbReference type="ChEBI" id="CHEBI:30616"/>
    </ligand>
</feature>
<feature type="binding site" evidence="1">
    <location>
        <position position="166"/>
    </location>
    <ligand>
        <name>ATP</name>
        <dbReference type="ChEBI" id="CHEBI:30616"/>
    </ligand>
</feature>
<feature type="binding site" evidence="1">
    <location>
        <position position="169"/>
    </location>
    <ligand>
        <name>ATP</name>
        <dbReference type="ChEBI" id="CHEBI:30616"/>
    </ligand>
</feature>
<proteinExistence type="inferred from homology"/>
<accession>Q3SKN7</accession>
<reference key="1">
    <citation type="journal article" date="2006" name="J. Bacteriol.">
        <title>The genome sequence of the obligately chemolithoautotrophic, facultatively anaerobic bacterium Thiobacillus denitrificans.</title>
        <authorList>
            <person name="Beller H.R."/>
            <person name="Chain P.S."/>
            <person name="Letain T.E."/>
            <person name="Chakicherla A."/>
            <person name="Larimer F.W."/>
            <person name="Richardson P.M."/>
            <person name="Coleman M.A."/>
            <person name="Wood A.P."/>
            <person name="Kelly D.P."/>
        </authorList>
    </citation>
    <scope>NUCLEOTIDE SEQUENCE [LARGE SCALE GENOMIC DNA]</scope>
    <source>
        <strain>ATCC 25259 / T1</strain>
    </source>
</reference>
<organism>
    <name type="scientific">Thiobacillus denitrificans (strain ATCC 25259 / T1)</name>
    <dbReference type="NCBI Taxonomy" id="292415"/>
    <lineage>
        <taxon>Bacteria</taxon>
        <taxon>Pseudomonadati</taxon>
        <taxon>Pseudomonadota</taxon>
        <taxon>Betaproteobacteria</taxon>
        <taxon>Nitrosomonadales</taxon>
        <taxon>Thiobacillaceae</taxon>
        <taxon>Thiobacillus</taxon>
    </lineage>
</organism>
<gene>
    <name evidence="1" type="primary">pyrH</name>
    <name type="ordered locus">Tbd_0787</name>
</gene>
<protein>
    <recommendedName>
        <fullName evidence="1">Uridylate kinase</fullName>
        <shortName evidence="1">UK</shortName>
        <ecNumber evidence="1">2.7.4.22</ecNumber>
    </recommendedName>
    <alternativeName>
        <fullName evidence="1">Uridine monophosphate kinase</fullName>
        <shortName evidence="1">UMP kinase</shortName>
        <shortName evidence="1">UMPK</shortName>
    </alternativeName>
</protein>
<evidence type="ECO:0000255" key="1">
    <source>
        <dbReference type="HAMAP-Rule" id="MF_01220"/>
    </source>
</evidence>
<keyword id="KW-0067">ATP-binding</keyword>
<keyword id="KW-0963">Cytoplasm</keyword>
<keyword id="KW-0418">Kinase</keyword>
<keyword id="KW-0547">Nucleotide-binding</keyword>
<keyword id="KW-0665">Pyrimidine biosynthesis</keyword>
<keyword id="KW-1185">Reference proteome</keyword>
<keyword id="KW-0808">Transferase</keyword>
<comment type="function">
    <text evidence="1">Catalyzes the reversible phosphorylation of UMP to UDP.</text>
</comment>
<comment type="catalytic activity">
    <reaction evidence="1">
        <text>UMP + ATP = UDP + ADP</text>
        <dbReference type="Rhea" id="RHEA:24400"/>
        <dbReference type="ChEBI" id="CHEBI:30616"/>
        <dbReference type="ChEBI" id="CHEBI:57865"/>
        <dbReference type="ChEBI" id="CHEBI:58223"/>
        <dbReference type="ChEBI" id="CHEBI:456216"/>
        <dbReference type="EC" id="2.7.4.22"/>
    </reaction>
</comment>
<comment type="activity regulation">
    <text evidence="1">Inhibited by UTP.</text>
</comment>
<comment type="pathway">
    <text evidence="1">Pyrimidine metabolism; CTP biosynthesis via de novo pathway; UDP from UMP (UMPK route): step 1/1.</text>
</comment>
<comment type="subunit">
    <text evidence="1">Homohexamer.</text>
</comment>
<comment type="subcellular location">
    <subcellularLocation>
        <location evidence="1">Cytoplasm</location>
    </subcellularLocation>
</comment>
<comment type="similarity">
    <text evidence="1">Belongs to the UMP kinase family.</text>
</comment>